<keyword id="KW-0058">Aromatic hydrocarbons catabolism</keyword>
<keyword id="KW-0274">FAD</keyword>
<keyword id="KW-0285">Flavoprotein</keyword>
<keyword id="KW-0520">NAD</keyword>
<keyword id="KW-0560">Oxidoreductase</keyword>
<accession>B7N8Q4</accession>
<protein>
    <recommendedName>
        <fullName evidence="1">3-(3-hydroxy-phenyl)propionate/3-hydroxycinnamic acid hydroxylase</fullName>
        <shortName evidence="1">3-HCI hydroxylase</shortName>
        <shortName evidence="1">3-HPP hydroxylase</shortName>
        <ecNumber evidence="1">1.14.13.127</ecNumber>
    </recommendedName>
</protein>
<dbReference type="EC" id="1.14.13.127" evidence="1"/>
<dbReference type="EMBL" id="CU928163">
    <property type="protein sequence ID" value="CAR11605.1"/>
    <property type="molecule type" value="Genomic_DNA"/>
</dbReference>
<dbReference type="RefSeq" id="WP_001007420.1">
    <property type="nucleotide sequence ID" value="NC_011751.1"/>
</dbReference>
<dbReference type="RefSeq" id="YP_002411153.1">
    <property type="nucleotide sequence ID" value="NC_011751.1"/>
</dbReference>
<dbReference type="SMR" id="B7N8Q4"/>
<dbReference type="STRING" id="585056.ECUMN_0390"/>
<dbReference type="KEGG" id="eum:ECUMN_0390"/>
<dbReference type="PATRIC" id="fig|585056.7.peg.588"/>
<dbReference type="HOGENOM" id="CLU_009665_20_2_6"/>
<dbReference type="UniPathway" id="UPA00714"/>
<dbReference type="Proteomes" id="UP000007097">
    <property type="component" value="Chromosome"/>
</dbReference>
<dbReference type="GO" id="GO:0008688">
    <property type="term" value="F:3-(3-hydroxyphenyl)propionate hydroxylase activity"/>
    <property type="evidence" value="ECO:0007669"/>
    <property type="project" value="UniProtKB-UniRule"/>
</dbReference>
<dbReference type="GO" id="GO:0071949">
    <property type="term" value="F:FAD binding"/>
    <property type="evidence" value="ECO:0007669"/>
    <property type="project" value="InterPro"/>
</dbReference>
<dbReference type="GO" id="GO:0019622">
    <property type="term" value="P:3-(3-hydroxy)phenylpropionate catabolic process"/>
    <property type="evidence" value="ECO:0007669"/>
    <property type="project" value="UniProtKB-UniRule"/>
</dbReference>
<dbReference type="GO" id="GO:0019380">
    <property type="term" value="P:3-phenylpropionate catabolic process"/>
    <property type="evidence" value="ECO:0007669"/>
    <property type="project" value="UniProtKB-UniPathway"/>
</dbReference>
<dbReference type="FunFam" id="3.30.70.2450:FF:000001">
    <property type="entry name" value="3-(3-hydroxy-phenyl)propionate/3-hydroxycinnamic acid hydroxylase"/>
    <property type="match status" value="1"/>
</dbReference>
<dbReference type="FunFam" id="3.50.50.60:FF:000126">
    <property type="entry name" value="3-(3-hydroxy-phenyl)propionate/3-hydroxycinnamic acid hydroxylase"/>
    <property type="match status" value="1"/>
</dbReference>
<dbReference type="Gene3D" id="3.30.70.2450">
    <property type="match status" value="1"/>
</dbReference>
<dbReference type="Gene3D" id="3.50.50.60">
    <property type="entry name" value="FAD/NAD(P)-binding domain"/>
    <property type="match status" value="1"/>
</dbReference>
<dbReference type="HAMAP" id="MF_01652">
    <property type="entry name" value="MhpA"/>
    <property type="match status" value="1"/>
</dbReference>
<dbReference type="InterPro" id="IPR023786">
    <property type="entry name" value="3-HPP/3HCI_hydroxylase"/>
</dbReference>
<dbReference type="InterPro" id="IPR002938">
    <property type="entry name" value="FAD-bd"/>
</dbReference>
<dbReference type="InterPro" id="IPR036188">
    <property type="entry name" value="FAD/NAD-bd_sf"/>
</dbReference>
<dbReference type="InterPro" id="IPR050631">
    <property type="entry name" value="PheA/TfdB_FAD_monoxygenase"/>
</dbReference>
<dbReference type="NCBIfam" id="NF004827">
    <property type="entry name" value="PRK06183.1-1"/>
    <property type="match status" value="1"/>
</dbReference>
<dbReference type="NCBIfam" id="NF004829">
    <property type="entry name" value="PRK06183.1-3"/>
    <property type="match status" value="1"/>
</dbReference>
<dbReference type="NCBIfam" id="NF004831">
    <property type="entry name" value="PRK06183.1-5"/>
    <property type="match status" value="1"/>
</dbReference>
<dbReference type="PANTHER" id="PTHR43476">
    <property type="entry name" value="3-(3-HYDROXY-PHENYL)PROPIONATE/3-HYDROXYCINNAMIC ACID HYDROXYLASE"/>
    <property type="match status" value="1"/>
</dbReference>
<dbReference type="PANTHER" id="PTHR43476:SF3">
    <property type="entry name" value="FAD-BINDING MONOOXYGENASE"/>
    <property type="match status" value="1"/>
</dbReference>
<dbReference type="Pfam" id="PF01494">
    <property type="entry name" value="FAD_binding_3"/>
    <property type="match status" value="1"/>
</dbReference>
<dbReference type="PRINTS" id="PR00420">
    <property type="entry name" value="RNGMNOXGNASE"/>
</dbReference>
<dbReference type="SUPFAM" id="SSF51905">
    <property type="entry name" value="FAD/NAD(P)-binding domain"/>
    <property type="match status" value="1"/>
</dbReference>
<organism>
    <name type="scientific">Escherichia coli O17:K52:H18 (strain UMN026 / ExPEC)</name>
    <dbReference type="NCBI Taxonomy" id="585056"/>
    <lineage>
        <taxon>Bacteria</taxon>
        <taxon>Pseudomonadati</taxon>
        <taxon>Pseudomonadota</taxon>
        <taxon>Gammaproteobacteria</taxon>
        <taxon>Enterobacterales</taxon>
        <taxon>Enterobacteriaceae</taxon>
        <taxon>Escherichia</taxon>
    </lineage>
</organism>
<proteinExistence type="inferred from homology"/>
<feature type="chain" id="PRO_1000186995" description="3-(3-hydroxy-phenyl)propionate/3-hydroxycinnamic acid hydroxylase">
    <location>
        <begin position="1"/>
        <end position="554"/>
    </location>
</feature>
<feature type="binding site" evidence="1">
    <location>
        <begin position="17"/>
        <end position="46"/>
    </location>
    <ligand>
        <name>FAD</name>
        <dbReference type="ChEBI" id="CHEBI:57692"/>
    </ligand>
</feature>
<feature type="binding site" evidence="1">
    <location>
        <begin position="285"/>
        <end position="295"/>
    </location>
    <ligand>
        <name>FAD</name>
        <dbReference type="ChEBI" id="CHEBI:57692"/>
    </ligand>
</feature>
<sequence length="554" mass="62213">MAIQHPDIQPAVNHSVQVAIAGAGPVGLMMANYLGQMGIDVLVVEKLDKLIDYPRAIGIDDEALRTMQSVGLVDNVLPHTTPWHAMRFLTPKGRCFADIQPMTDEFGWPRRNAFIQPQVDAVMLEGLSRFPNVRCLFSRELEAFSQQDDEVTLHLKTEEGQRETVKAQWLVACDGGASFVRRTLNVPFEGKTAPNQWIVVDIANDPLSTPHIYLCCDPVRPYVSAALPHAVRRFEFMVMPGETEEQLREPQNMRKLLSKVLPNPDNVELIRQRVYTHNARLAQRFRIDRVLLAGDAAHIMPVWQGQGYNSGMRDAFNLAWKLALVIQGKARDALLDTYQQERRDHAKAMIDLSVTAGNVLAPPKRWQGTLRDGVSWLLNYLPPVKRYFLEMRFKPMPQYYGGALVREGEAKHSPVGKMFIQPKVTLENGDVTLLDNAIGANFAVIGWGCNPLWGMSDEQIQQWRALGTRFIQVVPEVQIHTAQDNHDGVLRVGDTQGRLRSWFAQHNASLVVMRPDRFVAATAIPQTLGKTLNKLASVMTLTRPDADVSVEKVA</sequence>
<evidence type="ECO:0000255" key="1">
    <source>
        <dbReference type="HAMAP-Rule" id="MF_01652"/>
    </source>
</evidence>
<gene>
    <name evidence="1" type="primary">mhpA</name>
    <name type="ordered locus">ECUMN_0390</name>
</gene>
<name>MHPA_ECOLU</name>
<reference key="1">
    <citation type="journal article" date="2009" name="PLoS Genet.">
        <title>Organised genome dynamics in the Escherichia coli species results in highly diverse adaptive paths.</title>
        <authorList>
            <person name="Touchon M."/>
            <person name="Hoede C."/>
            <person name="Tenaillon O."/>
            <person name="Barbe V."/>
            <person name="Baeriswyl S."/>
            <person name="Bidet P."/>
            <person name="Bingen E."/>
            <person name="Bonacorsi S."/>
            <person name="Bouchier C."/>
            <person name="Bouvet O."/>
            <person name="Calteau A."/>
            <person name="Chiapello H."/>
            <person name="Clermont O."/>
            <person name="Cruveiller S."/>
            <person name="Danchin A."/>
            <person name="Diard M."/>
            <person name="Dossat C."/>
            <person name="Karoui M.E."/>
            <person name="Frapy E."/>
            <person name="Garry L."/>
            <person name="Ghigo J.M."/>
            <person name="Gilles A.M."/>
            <person name="Johnson J."/>
            <person name="Le Bouguenec C."/>
            <person name="Lescat M."/>
            <person name="Mangenot S."/>
            <person name="Martinez-Jehanne V."/>
            <person name="Matic I."/>
            <person name="Nassif X."/>
            <person name="Oztas S."/>
            <person name="Petit M.A."/>
            <person name="Pichon C."/>
            <person name="Rouy Z."/>
            <person name="Ruf C.S."/>
            <person name="Schneider D."/>
            <person name="Tourret J."/>
            <person name="Vacherie B."/>
            <person name="Vallenet D."/>
            <person name="Medigue C."/>
            <person name="Rocha E.P.C."/>
            <person name="Denamur E."/>
        </authorList>
    </citation>
    <scope>NUCLEOTIDE SEQUENCE [LARGE SCALE GENOMIC DNA]</scope>
    <source>
        <strain>UMN026 / ExPEC</strain>
    </source>
</reference>
<comment type="function">
    <text evidence="1">Catalyzes the insertion of one atom of molecular oxygen into position 2 of the phenyl ring of 3-(3-hydroxyphenyl)propionate (3-HPP) and hydroxycinnamic acid (3HCI).</text>
</comment>
<comment type="catalytic activity">
    <reaction evidence="1">
        <text>3-(3-hydroxyphenyl)propanoate + NADH + O2 + H(+) = 3-(2,3-dihydroxyphenyl)propanoate + NAD(+) + H2O</text>
        <dbReference type="Rhea" id="RHEA:24785"/>
        <dbReference type="ChEBI" id="CHEBI:15377"/>
        <dbReference type="ChEBI" id="CHEBI:15378"/>
        <dbReference type="ChEBI" id="CHEBI:15379"/>
        <dbReference type="ChEBI" id="CHEBI:46951"/>
        <dbReference type="ChEBI" id="CHEBI:57277"/>
        <dbReference type="ChEBI" id="CHEBI:57540"/>
        <dbReference type="ChEBI" id="CHEBI:57945"/>
        <dbReference type="EC" id="1.14.13.127"/>
    </reaction>
</comment>
<comment type="catalytic activity">
    <reaction evidence="1">
        <text>(2E)-3-(3-hydroxyphenyl)prop-2-enoate + NADH + O2 + H(+) = (2E)-3-(2,3-dihydroxyphenyl)prop-2-enoate + NAD(+) + H2O</text>
        <dbReference type="Rhea" id="RHEA:27846"/>
        <dbReference type="ChEBI" id="CHEBI:15377"/>
        <dbReference type="ChEBI" id="CHEBI:15378"/>
        <dbReference type="ChEBI" id="CHEBI:15379"/>
        <dbReference type="ChEBI" id="CHEBI:47928"/>
        <dbReference type="ChEBI" id="CHEBI:57540"/>
        <dbReference type="ChEBI" id="CHEBI:57945"/>
        <dbReference type="ChEBI" id="CHEBI:58642"/>
        <dbReference type="EC" id="1.14.13.127"/>
    </reaction>
</comment>
<comment type="cofactor">
    <cofactor evidence="1">
        <name>FAD</name>
        <dbReference type="ChEBI" id="CHEBI:57692"/>
    </cofactor>
</comment>
<comment type="pathway">
    <text evidence="1">Aromatic compound metabolism; 3-phenylpropanoate degradation.</text>
</comment>
<comment type="similarity">
    <text evidence="1">Belongs to the PheA/TfdB FAD monooxygenase family.</text>
</comment>